<name>MGRB_ECOL5</name>
<reference key="1">
    <citation type="journal article" date="2006" name="Mol. Microbiol.">
        <title>Role of pathogenicity island-associated integrases in the genome plasticity of uropathogenic Escherichia coli strain 536.</title>
        <authorList>
            <person name="Hochhut B."/>
            <person name="Wilde C."/>
            <person name="Balling G."/>
            <person name="Middendorf B."/>
            <person name="Dobrindt U."/>
            <person name="Brzuszkiewicz E."/>
            <person name="Gottschalk G."/>
            <person name="Carniel E."/>
            <person name="Hacker J."/>
        </authorList>
    </citation>
    <scope>NUCLEOTIDE SEQUENCE [LARGE SCALE GENOMIC DNA]</scope>
    <source>
        <strain>536 / UPEC</strain>
    </source>
</reference>
<dbReference type="EMBL" id="CP000247">
    <property type="status" value="NOT_ANNOTATED_CDS"/>
    <property type="molecule type" value="Genomic_DNA"/>
</dbReference>
<dbReference type="RefSeq" id="WP_000714543.1">
    <property type="nucleotide sequence ID" value="NC_008253.1"/>
</dbReference>
<dbReference type="Proteomes" id="UP000009182">
    <property type="component" value="Chromosome"/>
</dbReference>
<dbReference type="GO" id="GO:0005886">
    <property type="term" value="C:plasma membrane"/>
    <property type="evidence" value="ECO:0007669"/>
    <property type="project" value="UniProtKB-SubCell"/>
</dbReference>
<dbReference type="GO" id="GO:0070298">
    <property type="term" value="P:negative regulation of phosphorelay signal transduction system"/>
    <property type="evidence" value="ECO:0007669"/>
    <property type="project" value="UniProtKB-UniRule"/>
</dbReference>
<dbReference type="HAMAP" id="MF_01596">
    <property type="entry name" value="MgrB"/>
    <property type="match status" value="1"/>
</dbReference>
<dbReference type="InterPro" id="IPR020907">
    <property type="entry name" value="MgrB"/>
</dbReference>
<dbReference type="NCBIfam" id="NF007635">
    <property type="entry name" value="PRK10299.1"/>
    <property type="match status" value="1"/>
</dbReference>
<dbReference type="Pfam" id="PF13998">
    <property type="entry name" value="MgrB"/>
    <property type="match status" value="1"/>
</dbReference>
<dbReference type="PROSITE" id="PS51257">
    <property type="entry name" value="PROKAR_LIPOPROTEIN"/>
    <property type="match status" value="1"/>
</dbReference>
<accession>P0C7B3</accession>
<proteinExistence type="inferred from homology"/>
<gene>
    <name evidence="1" type="primary">mgrB</name>
    <name type="ordered locus">ECP_1769.1</name>
</gene>
<protein>
    <recommendedName>
        <fullName evidence="1">PhoP/PhoQ regulator MgrB</fullName>
    </recommendedName>
</protein>
<sequence>MKKFRWVALVVVVLACLLLWAQVFNMMCDQDVQFFSGICAINQFIP</sequence>
<organism>
    <name type="scientific">Escherichia coli O6:K15:H31 (strain 536 / UPEC)</name>
    <dbReference type="NCBI Taxonomy" id="362663"/>
    <lineage>
        <taxon>Bacteria</taxon>
        <taxon>Pseudomonadati</taxon>
        <taxon>Pseudomonadota</taxon>
        <taxon>Gammaproteobacteria</taxon>
        <taxon>Enterobacterales</taxon>
        <taxon>Enterobacteriaceae</taxon>
        <taxon>Escherichia</taxon>
    </lineage>
</organism>
<feature type="chain" id="PRO_0000330673" description="PhoP/PhoQ regulator MgrB">
    <location>
        <begin position="1"/>
        <end position="46"/>
    </location>
</feature>
<feature type="transmembrane region" description="Helical" evidence="1">
    <location>
        <begin position="6"/>
        <end position="26"/>
    </location>
</feature>
<keyword id="KW-0997">Cell inner membrane</keyword>
<keyword id="KW-1003">Cell membrane</keyword>
<keyword id="KW-0472">Membrane</keyword>
<keyword id="KW-0812">Transmembrane</keyword>
<keyword id="KW-1133">Transmembrane helix</keyword>
<evidence type="ECO:0000255" key="1">
    <source>
        <dbReference type="HAMAP-Rule" id="MF_01596"/>
    </source>
</evidence>
<comment type="function">
    <text evidence="1">PhoP-regulated transcription is redox-sensitive, being activated when the periplasm becomes more reducing. MgrB acts between DsbA/DsbB and PhoP/PhoQ in this pathway. Represses PhoP/PhoQ signaling, possibly by binding to the periplasmic domain of PhoQ, altering its activity and that of downstream effector PhoP.</text>
</comment>
<comment type="subunit">
    <text evidence="1">May form homooligomers. Probably interacts with the periplasmic domain of PhoQ.</text>
</comment>
<comment type="subcellular location">
    <subcellularLocation>
        <location evidence="1">Cell inner membrane</location>
        <topology evidence="1">Single-pass membrane protein</topology>
    </subcellularLocation>
</comment>
<comment type="similarity">
    <text evidence="1">Belongs to the MgrB family.</text>
</comment>